<feature type="chain" id="PRO_0000358750" description="Transcription factor bHLH53">
    <location>
        <begin position="1"/>
        <end position="291"/>
    </location>
</feature>
<feature type="domain" description="bHLH" evidence="1">
    <location>
        <begin position="163"/>
        <end position="212"/>
    </location>
</feature>
<reference key="1">
    <citation type="journal article" date="1999" name="Nature">
        <title>Sequence and analysis of chromosome 2 of the plant Arabidopsis thaliana.</title>
        <authorList>
            <person name="Lin X."/>
            <person name="Kaul S."/>
            <person name="Rounsley S.D."/>
            <person name="Shea T.P."/>
            <person name="Benito M.-I."/>
            <person name="Town C.D."/>
            <person name="Fujii C.Y."/>
            <person name="Mason T.M."/>
            <person name="Bowman C.L."/>
            <person name="Barnstead M.E."/>
            <person name="Feldblyum T.V."/>
            <person name="Buell C.R."/>
            <person name="Ketchum K.A."/>
            <person name="Lee J.J."/>
            <person name="Ronning C.M."/>
            <person name="Koo H.L."/>
            <person name="Moffat K.S."/>
            <person name="Cronin L.A."/>
            <person name="Shen M."/>
            <person name="Pai G."/>
            <person name="Van Aken S."/>
            <person name="Umayam L."/>
            <person name="Tallon L.J."/>
            <person name="Gill J.E."/>
            <person name="Adams M.D."/>
            <person name="Carrera A.J."/>
            <person name="Creasy T.H."/>
            <person name="Goodman H.M."/>
            <person name="Somerville C.R."/>
            <person name="Copenhaver G.P."/>
            <person name="Preuss D."/>
            <person name="Nierman W.C."/>
            <person name="White O."/>
            <person name="Eisen J.A."/>
            <person name="Salzberg S.L."/>
            <person name="Fraser C.M."/>
            <person name="Venter J.C."/>
        </authorList>
    </citation>
    <scope>NUCLEOTIDE SEQUENCE [LARGE SCALE GENOMIC DNA]</scope>
    <source>
        <strain>cv. Columbia</strain>
    </source>
</reference>
<reference key="2">
    <citation type="journal article" date="2017" name="Plant J.">
        <title>Araport11: a complete reannotation of the Arabidopsis thaliana reference genome.</title>
        <authorList>
            <person name="Cheng C.Y."/>
            <person name="Krishnakumar V."/>
            <person name="Chan A.P."/>
            <person name="Thibaud-Nissen F."/>
            <person name="Schobel S."/>
            <person name="Town C.D."/>
        </authorList>
    </citation>
    <scope>GENOME REANNOTATION</scope>
    <source>
        <strain>cv. Columbia</strain>
    </source>
</reference>
<reference key="3">
    <citation type="journal article" date="2002" name="Plant Physiol.">
        <title>Cloning and sequencing of cDNAs for hypothetical genes from chromosome 2 of Arabidopsis.</title>
        <authorList>
            <person name="Xiao Y.-L."/>
            <person name="Malik M."/>
            <person name="Whitelaw C.A."/>
            <person name="Town C.D."/>
        </authorList>
    </citation>
    <scope>NUCLEOTIDE SEQUENCE [LARGE SCALE MRNA]</scope>
    <source>
        <strain>cv. Columbia</strain>
    </source>
</reference>
<reference key="4">
    <citation type="journal article" date="2003" name="Mol. Biol. Evol.">
        <title>The basic helix-loop-helix transcription factor family in plants: a genome-wide study of protein structure and functional diversity.</title>
        <authorList>
            <person name="Heim M.A."/>
            <person name="Jakoby M."/>
            <person name="Werber M."/>
            <person name="Martin C."/>
            <person name="Weisshaar B."/>
            <person name="Bailey P.C."/>
        </authorList>
    </citation>
    <scope>NUCLEOTIDE SEQUENCE [MRNA] OF 26-291</scope>
    <scope>TISSUE SPECIFICITY</scope>
    <scope>GENE FAMILY</scope>
    <scope>NOMENCLATURE</scope>
    <source>
        <strain>cv. Columbia</strain>
    </source>
</reference>
<reference key="5">
    <citation type="journal article" date="2003" name="Plant Cell">
        <title>The Arabidopsis basic/helix-loop-helix transcription factor family.</title>
        <authorList>
            <person name="Toledo-Ortiz G."/>
            <person name="Huq E."/>
            <person name="Quail P.H."/>
        </authorList>
    </citation>
    <scope>GENE FAMILY</scope>
</reference>
<reference key="6">
    <citation type="journal article" date="2003" name="Plant Cell">
        <title>Update on the basic helix-loop-helix transcription factor gene family in Arabidopsis thaliana.</title>
        <authorList>
            <person name="Bailey P.C."/>
            <person name="Martin C."/>
            <person name="Toledo-Ortiz G."/>
            <person name="Quail P.H."/>
            <person name="Huq E."/>
            <person name="Heim M.A."/>
            <person name="Jakoby M."/>
            <person name="Werber M."/>
            <person name="Weisshaar B."/>
        </authorList>
    </citation>
    <scope>GENE FAMILY</scope>
    <scope>NOMENCLATURE</scope>
</reference>
<proteinExistence type="evidence at transcript level"/>
<gene>
    <name type="primary">BHLH53</name>
    <name type="synonym">EN123</name>
    <name type="ordered locus">At2g34820</name>
    <name type="ORF">F19I3.5</name>
</gene>
<dbReference type="EMBL" id="AC004238">
    <property type="protein sequence ID" value="AAC12822.1"/>
    <property type="status" value="ALT_SEQ"/>
    <property type="molecule type" value="Genomic_DNA"/>
</dbReference>
<dbReference type="EMBL" id="CP002685">
    <property type="protein sequence ID" value="AEC09025.1"/>
    <property type="molecule type" value="Genomic_DNA"/>
</dbReference>
<dbReference type="EMBL" id="AY234412">
    <property type="protein sequence ID" value="AAO92056.1"/>
    <property type="molecule type" value="mRNA"/>
</dbReference>
<dbReference type="EMBL" id="AF488588">
    <property type="status" value="NOT_ANNOTATED_CDS"/>
    <property type="molecule type" value="mRNA"/>
</dbReference>
<dbReference type="PIR" id="T00464">
    <property type="entry name" value="T00464"/>
</dbReference>
<dbReference type="RefSeq" id="NP_181028.2">
    <property type="nucleotide sequence ID" value="NM_129035.4"/>
</dbReference>
<dbReference type="SMR" id="Q84RD0"/>
<dbReference type="FunCoup" id="Q84RD0">
    <property type="interactions" value="109"/>
</dbReference>
<dbReference type="STRING" id="3702.Q84RD0"/>
<dbReference type="PaxDb" id="3702-AT2G34820.1"/>
<dbReference type="EnsemblPlants" id="AT2G34820.1">
    <property type="protein sequence ID" value="AT2G34820.1"/>
    <property type="gene ID" value="AT2G34820"/>
</dbReference>
<dbReference type="GeneID" id="818047"/>
<dbReference type="Gramene" id="AT2G34820.1">
    <property type="protein sequence ID" value="AT2G34820.1"/>
    <property type="gene ID" value="AT2G34820"/>
</dbReference>
<dbReference type="KEGG" id="ath:AT2G34820"/>
<dbReference type="Araport" id="AT2G34820"/>
<dbReference type="TAIR" id="AT2G34820"/>
<dbReference type="eggNOG" id="ENOG502S03F">
    <property type="taxonomic scope" value="Eukaryota"/>
</dbReference>
<dbReference type="HOGENOM" id="CLU_083453_0_0_1"/>
<dbReference type="InParanoid" id="Q84RD0"/>
<dbReference type="OMA" id="THFDAFC"/>
<dbReference type="PhylomeDB" id="Q84RD0"/>
<dbReference type="PRO" id="PR:Q84RD0"/>
<dbReference type="Proteomes" id="UP000006548">
    <property type="component" value="Chromosome 2"/>
</dbReference>
<dbReference type="ExpressionAtlas" id="Q84RD0">
    <property type="expression patterns" value="baseline and differential"/>
</dbReference>
<dbReference type="GO" id="GO:0005634">
    <property type="term" value="C:nucleus"/>
    <property type="evidence" value="ECO:0007669"/>
    <property type="project" value="UniProtKB-SubCell"/>
</dbReference>
<dbReference type="GO" id="GO:0003700">
    <property type="term" value="F:DNA-binding transcription factor activity"/>
    <property type="evidence" value="ECO:0000250"/>
    <property type="project" value="TAIR"/>
</dbReference>
<dbReference type="GO" id="GO:0046983">
    <property type="term" value="F:protein dimerization activity"/>
    <property type="evidence" value="ECO:0007669"/>
    <property type="project" value="InterPro"/>
</dbReference>
<dbReference type="GO" id="GO:0000976">
    <property type="term" value="F:transcription cis-regulatory region binding"/>
    <property type="evidence" value="ECO:0000353"/>
    <property type="project" value="TAIR"/>
</dbReference>
<dbReference type="GO" id="GO:0006355">
    <property type="term" value="P:regulation of DNA-templated transcription"/>
    <property type="evidence" value="ECO:0000304"/>
    <property type="project" value="TAIR"/>
</dbReference>
<dbReference type="CDD" id="cd11393">
    <property type="entry name" value="bHLH_AtbHLH_like"/>
    <property type="match status" value="1"/>
</dbReference>
<dbReference type="Gene3D" id="4.10.280.10">
    <property type="entry name" value="Helix-loop-helix DNA-binding domain"/>
    <property type="match status" value="1"/>
</dbReference>
<dbReference type="InterPro" id="IPR045239">
    <property type="entry name" value="bHLH95_bHLH"/>
</dbReference>
<dbReference type="InterPro" id="IPR011598">
    <property type="entry name" value="bHLH_dom"/>
</dbReference>
<dbReference type="InterPro" id="IPR036638">
    <property type="entry name" value="HLH_DNA-bd_sf"/>
</dbReference>
<dbReference type="InterPro" id="IPR045843">
    <property type="entry name" value="IND-like"/>
</dbReference>
<dbReference type="PANTHER" id="PTHR16223:SF49">
    <property type="entry name" value="TRANSCRIPTION FACTOR BHLH52-RELATED"/>
    <property type="match status" value="1"/>
</dbReference>
<dbReference type="PANTHER" id="PTHR16223">
    <property type="entry name" value="TRANSCRIPTION FACTOR BHLH83-RELATED"/>
    <property type="match status" value="1"/>
</dbReference>
<dbReference type="Pfam" id="PF00010">
    <property type="entry name" value="HLH"/>
    <property type="match status" value="1"/>
</dbReference>
<dbReference type="SMART" id="SM00353">
    <property type="entry name" value="HLH"/>
    <property type="match status" value="1"/>
</dbReference>
<dbReference type="SUPFAM" id="SSF47459">
    <property type="entry name" value="HLH, helix-loop-helix DNA-binding domain"/>
    <property type="match status" value="1"/>
</dbReference>
<dbReference type="PROSITE" id="PS50888">
    <property type="entry name" value="BHLH"/>
    <property type="match status" value="1"/>
</dbReference>
<keyword id="KW-0238">DNA-binding</keyword>
<keyword id="KW-0539">Nucleus</keyword>
<keyword id="KW-1185">Reference proteome</keyword>
<keyword id="KW-0804">Transcription</keyword>
<keyword id="KW-0805">Transcription regulation</keyword>
<name>BH053_ARATH</name>
<sequence>MSMDCLSYFFNYDPPVQLQDCFIPEMDMIIPETDSFFFQSQPQLEFHQPLFQEEAPSQTHFDPFCDQFLSPQEIFLPNPKNEIFNETHDLDFFLPTPKRQRLVNSSYNCNTQNHFQSRNPNFFDPFGDTDFVPESCTFQEFRVPDFSLAFKVGRGDQDDSKKPTLSSQSIAARGRRRRIAEKTHELGKLIPGGNKLNTAEMFQAAAKYVKFLQSQVGILQLMQTTKKGSSNVQMETQYLLESQAIQEKLSTEEVCLVPCEMVQDLTTEETICRTPNISREINKLLSKHLAN</sequence>
<organism>
    <name type="scientific">Arabidopsis thaliana</name>
    <name type="common">Mouse-ear cress</name>
    <dbReference type="NCBI Taxonomy" id="3702"/>
    <lineage>
        <taxon>Eukaryota</taxon>
        <taxon>Viridiplantae</taxon>
        <taxon>Streptophyta</taxon>
        <taxon>Embryophyta</taxon>
        <taxon>Tracheophyta</taxon>
        <taxon>Spermatophyta</taxon>
        <taxon>Magnoliopsida</taxon>
        <taxon>eudicotyledons</taxon>
        <taxon>Gunneridae</taxon>
        <taxon>Pentapetalae</taxon>
        <taxon>rosids</taxon>
        <taxon>malvids</taxon>
        <taxon>Brassicales</taxon>
        <taxon>Brassicaceae</taxon>
        <taxon>Camelineae</taxon>
        <taxon>Arabidopsis</taxon>
    </lineage>
</organism>
<comment type="subunit">
    <text evidence="3">Homodimer.</text>
</comment>
<comment type="subcellular location">
    <subcellularLocation>
        <location evidence="1">Nucleus</location>
    </subcellularLocation>
</comment>
<comment type="tissue specificity">
    <text evidence="2">Expressed constitutively in roots, leaves, stems, and flowers.</text>
</comment>
<comment type="sequence caution" evidence="3">
    <conflict type="erroneous gene model prediction">
        <sequence resource="EMBL-CDS" id="AAC12822"/>
    </conflict>
</comment>
<evidence type="ECO:0000255" key="1">
    <source>
        <dbReference type="PROSITE-ProRule" id="PRU00981"/>
    </source>
</evidence>
<evidence type="ECO:0000269" key="2">
    <source>
    </source>
</evidence>
<evidence type="ECO:0000305" key="3"/>
<protein>
    <recommendedName>
        <fullName>Transcription factor bHLH53</fullName>
    </recommendedName>
    <alternativeName>
        <fullName>Basic helix-loop-helix protein 53</fullName>
        <shortName>AtbHLH53</shortName>
        <shortName>bHLH 53</shortName>
    </alternativeName>
    <alternativeName>
        <fullName>Transcription factor EN 123</fullName>
    </alternativeName>
    <alternativeName>
        <fullName>bHLH transcription factor bHLH053</fullName>
    </alternativeName>
</protein>
<accession>Q84RD0</accession>
<accession>O64746</accession>